<protein>
    <recommendedName>
        <fullName evidence="1">Proteasome subunit beta 1</fullName>
        <ecNumber evidence="1">3.4.25.1</ecNumber>
    </recommendedName>
    <alternativeName>
        <fullName evidence="1">20S proteasome beta subunit 1</fullName>
    </alternativeName>
    <alternativeName>
        <fullName evidence="1">Proteasome core protein PsmB 1</fullName>
    </alternativeName>
</protein>
<keyword id="KW-0068">Autocatalytic cleavage</keyword>
<keyword id="KW-0963">Cytoplasm</keyword>
<keyword id="KW-0378">Hydrolase</keyword>
<keyword id="KW-0645">Protease</keyword>
<keyword id="KW-0647">Proteasome</keyword>
<keyword id="KW-1185">Reference proteome</keyword>
<keyword id="KW-0888">Threonine protease</keyword>
<keyword id="KW-0865">Zymogen</keyword>
<feature type="propeptide" id="PRO_0000397454" description="Removed in mature form; by autocatalysis" evidence="1">
    <location>
        <begin position="1"/>
        <end position="6"/>
    </location>
</feature>
<feature type="chain" id="PRO_0000397455" description="Proteasome subunit beta 1">
    <location>
        <begin position="7"/>
        <end position="196"/>
    </location>
</feature>
<feature type="active site" description="Nucleophile" evidence="1">
    <location>
        <position position="7"/>
    </location>
</feature>
<proteinExistence type="inferred from homology"/>
<dbReference type="EC" id="3.4.25.1" evidence="1"/>
<dbReference type="EMBL" id="AE006641">
    <property type="protein sequence ID" value="AAK40616.1"/>
    <property type="molecule type" value="Genomic_DNA"/>
</dbReference>
<dbReference type="PIR" id="A99170">
    <property type="entry name" value="A99170"/>
</dbReference>
<dbReference type="SMR" id="Q980L4"/>
<dbReference type="FunCoup" id="Q980L4">
    <property type="interactions" value="231"/>
</dbReference>
<dbReference type="STRING" id="273057.SSO0278"/>
<dbReference type="PaxDb" id="273057-SSO0278"/>
<dbReference type="EnsemblBacteria" id="AAK40616">
    <property type="protein sequence ID" value="AAK40616"/>
    <property type="gene ID" value="SSO0278"/>
</dbReference>
<dbReference type="KEGG" id="sso:SSO0278"/>
<dbReference type="PATRIC" id="fig|273057.12.peg.272"/>
<dbReference type="eggNOG" id="arCOG00970">
    <property type="taxonomic scope" value="Archaea"/>
</dbReference>
<dbReference type="HOGENOM" id="CLU_035750_7_2_2"/>
<dbReference type="InParanoid" id="Q980L4"/>
<dbReference type="PhylomeDB" id="Q980L4"/>
<dbReference type="Proteomes" id="UP000001974">
    <property type="component" value="Chromosome"/>
</dbReference>
<dbReference type="GO" id="GO:0005829">
    <property type="term" value="C:cytosol"/>
    <property type="evidence" value="ECO:0000318"/>
    <property type="project" value="GO_Central"/>
</dbReference>
<dbReference type="GO" id="GO:0019774">
    <property type="term" value="C:proteasome core complex, beta-subunit complex"/>
    <property type="evidence" value="ECO:0000318"/>
    <property type="project" value="GO_Central"/>
</dbReference>
<dbReference type="GO" id="GO:0004175">
    <property type="term" value="F:endopeptidase activity"/>
    <property type="evidence" value="ECO:0000318"/>
    <property type="project" value="GO_Central"/>
</dbReference>
<dbReference type="GO" id="GO:0004298">
    <property type="term" value="F:threonine-type endopeptidase activity"/>
    <property type="evidence" value="ECO:0007669"/>
    <property type="project" value="UniProtKB-UniRule"/>
</dbReference>
<dbReference type="GO" id="GO:0043161">
    <property type="term" value="P:proteasome-mediated ubiquitin-dependent protein catabolic process"/>
    <property type="evidence" value="ECO:0000318"/>
    <property type="project" value="GO_Central"/>
</dbReference>
<dbReference type="FunFam" id="3.60.20.10:FF:000079">
    <property type="entry name" value="Proteasome subunit beta 2"/>
    <property type="match status" value="1"/>
</dbReference>
<dbReference type="Gene3D" id="3.60.20.10">
    <property type="entry name" value="Glutamine Phosphoribosylpyrophosphate, subunit 1, domain 1"/>
    <property type="match status" value="1"/>
</dbReference>
<dbReference type="HAMAP" id="MF_02113_A">
    <property type="entry name" value="Proteasome_B_A"/>
    <property type="match status" value="1"/>
</dbReference>
<dbReference type="InterPro" id="IPR029055">
    <property type="entry name" value="Ntn_hydrolases_N"/>
</dbReference>
<dbReference type="InterPro" id="IPR019983">
    <property type="entry name" value="Pept_T1A_Psome_bsu_arc"/>
</dbReference>
<dbReference type="InterPro" id="IPR000243">
    <property type="entry name" value="Pept_T1A_subB"/>
</dbReference>
<dbReference type="InterPro" id="IPR016050">
    <property type="entry name" value="Proteasome_bsu_CS"/>
</dbReference>
<dbReference type="InterPro" id="IPR001353">
    <property type="entry name" value="Proteasome_sua/b"/>
</dbReference>
<dbReference type="InterPro" id="IPR023333">
    <property type="entry name" value="Proteasome_suB-type"/>
</dbReference>
<dbReference type="NCBIfam" id="TIGR03634">
    <property type="entry name" value="arc_protsome_B"/>
    <property type="match status" value="1"/>
</dbReference>
<dbReference type="PANTHER" id="PTHR32194:SF0">
    <property type="entry name" value="ATP-DEPENDENT PROTEASE SUBUNIT HSLV"/>
    <property type="match status" value="1"/>
</dbReference>
<dbReference type="PANTHER" id="PTHR32194">
    <property type="entry name" value="METALLOPROTEASE TLDD"/>
    <property type="match status" value="1"/>
</dbReference>
<dbReference type="Pfam" id="PF00227">
    <property type="entry name" value="Proteasome"/>
    <property type="match status" value="1"/>
</dbReference>
<dbReference type="PRINTS" id="PR00141">
    <property type="entry name" value="PROTEASOME"/>
</dbReference>
<dbReference type="SUPFAM" id="SSF56235">
    <property type="entry name" value="N-terminal nucleophile aminohydrolases (Ntn hydrolases)"/>
    <property type="match status" value="1"/>
</dbReference>
<dbReference type="PROSITE" id="PS00854">
    <property type="entry name" value="PROTEASOME_BETA_1"/>
    <property type="match status" value="1"/>
</dbReference>
<dbReference type="PROSITE" id="PS51476">
    <property type="entry name" value="PROTEASOME_BETA_2"/>
    <property type="match status" value="1"/>
</dbReference>
<gene>
    <name evidence="1" type="primary">psmB1</name>
    <name type="ordered locus">SSO0278</name>
</gene>
<sequence length="196" mass="21376">MEELPATAVGLKVNDGIVLASERRLSYGGYVLSKQAKKVYKINKFLMAGAGIYGDLQTLTRIMNVEIKYYEVSTGKPISVHAAAKLLSVILYQYKVMPFISEILFGGVDEKGPQLYVLDPIGSLIEDNYAAVGSGARIAIGVLESEYDPNMSLDVATQLITKAIKASIERDITSGDGIDLAIIDKKGNYENKFIPY</sequence>
<accession>Q980L4</accession>
<name>PSB1_SACS2</name>
<comment type="function">
    <text evidence="1">Component of the proteasome core, a large protease complex with broad specificity involved in protein degradation.</text>
</comment>
<comment type="catalytic activity">
    <reaction evidence="1">
        <text>Cleavage of peptide bonds with very broad specificity.</text>
        <dbReference type="EC" id="3.4.25.1"/>
    </reaction>
</comment>
<comment type="activity regulation">
    <text evidence="1">The formation of the proteasomal ATPase PAN-20S proteasome complex, via the docking of the C-termini of PAN into the intersubunit pockets in the alpha-rings, triggers opening of the gate for substrate entry. Interconversion between the open-gate and close-gate conformations leads to a dynamic regulation of the 20S proteasome proteolysis activity.</text>
</comment>
<comment type="subunit">
    <text evidence="1">The 20S proteasome core is composed of 14 alpha and 14 beta subunits that assemble into four stacked heptameric rings, resulting in a barrel-shaped structure. The two inner rings, each composed of seven catalytic beta subunits, are sandwiched by two outer rings, each composed of seven alpha subunits. The catalytic chamber with the active sites is on the inside of the barrel. Has a gated structure, the ends of the cylinder being occluded by the N-termini of the alpha-subunits. Is capped at one or both ends by the proteasome regulatory ATPase, PAN.</text>
</comment>
<comment type="subcellular location">
    <subcellularLocation>
        <location evidence="1">Cytoplasm</location>
    </subcellularLocation>
</comment>
<comment type="similarity">
    <text evidence="1">Belongs to the peptidase T1B family.</text>
</comment>
<evidence type="ECO:0000255" key="1">
    <source>
        <dbReference type="HAMAP-Rule" id="MF_02113"/>
    </source>
</evidence>
<reference key="1">
    <citation type="journal article" date="2001" name="Proc. Natl. Acad. Sci. U.S.A.">
        <title>The complete genome of the crenarchaeon Sulfolobus solfataricus P2.</title>
        <authorList>
            <person name="She Q."/>
            <person name="Singh R.K."/>
            <person name="Confalonieri F."/>
            <person name="Zivanovic Y."/>
            <person name="Allard G."/>
            <person name="Awayez M.J."/>
            <person name="Chan-Weiher C.C.-Y."/>
            <person name="Clausen I.G."/>
            <person name="Curtis B.A."/>
            <person name="De Moors A."/>
            <person name="Erauso G."/>
            <person name="Fletcher C."/>
            <person name="Gordon P.M.K."/>
            <person name="Heikamp-de Jong I."/>
            <person name="Jeffries A.C."/>
            <person name="Kozera C.J."/>
            <person name="Medina N."/>
            <person name="Peng X."/>
            <person name="Thi-Ngoc H.P."/>
            <person name="Redder P."/>
            <person name="Schenk M.E."/>
            <person name="Theriault C."/>
            <person name="Tolstrup N."/>
            <person name="Charlebois R.L."/>
            <person name="Doolittle W.F."/>
            <person name="Duguet M."/>
            <person name="Gaasterland T."/>
            <person name="Garrett R.A."/>
            <person name="Ragan M.A."/>
            <person name="Sensen C.W."/>
            <person name="Van der Oost J."/>
        </authorList>
    </citation>
    <scope>NUCLEOTIDE SEQUENCE [LARGE SCALE GENOMIC DNA]</scope>
    <source>
        <strain>ATCC 35092 / DSM 1617 / JCM 11322 / P2</strain>
    </source>
</reference>
<organism>
    <name type="scientific">Saccharolobus solfataricus (strain ATCC 35092 / DSM 1617 / JCM 11322 / P2)</name>
    <name type="common">Sulfolobus solfataricus</name>
    <dbReference type="NCBI Taxonomy" id="273057"/>
    <lineage>
        <taxon>Archaea</taxon>
        <taxon>Thermoproteota</taxon>
        <taxon>Thermoprotei</taxon>
        <taxon>Sulfolobales</taxon>
        <taxon>Sulfolobaceae</taxon>
        <taxon>Saccharolobus</taxon>
    </lineage>
</organism>